<name>TYPH_RHOP5</name>
<evidence type="ECO:0000255" key="1">
    <source>
        <dbReference type="HAMAP-Rule" id="MF_00703"/>
    </source>
</evidence>
<comment type="catalytic activity">
    <reaction evidence="1">
        <text>thymidine + phosphate = 2-deoxy-alpha-D-ribose 1-phosphate + thymine</text>
        <dbReference type="Rhea" id="RHEA:16037"/>
        <dbReference type="ChEBI" id="CHEBI:17748"/>
        <dbReference type="ChEBI" id="CHEBI:17821"/>
        <dbReference type="ChEBI" id="CHEBI:43474"/>
        <dbReference type="ChEBI" id="CHEBI:57259"/>
        <dbReference type="EC" id="2.4.2.4"/>
    </reaction>
</comment>
<comment type="similarity">
    <text evidence="1">Belongs to the thymidine/pyrimidine-nucleoside phosphorylase family. Type 2 subfamily.</text>
</comment>
<feature type="chain" id="PRO_0000314714" description="Putative thymidine phosphorylase">
    <location>
        <begin position="1"/>
        <end position="513"/>
    </location>
</feature>
<dbReference type="EC" id="2.4.2.4" evidence="1"/>
<dbReference type="EMBL" id="CP000463">
    <property type="protein sequence ID" value="ABJ08074.1"/>
    <property type="molecule type" value="Genomic_DNA"/>
</dbReference>
<dbReference type="SMR" id="Q07J10"/>
<dbReference type="STRING" id="316055.RPE_4149"/>
<dbReference type="KEGG" id="rpe:RPE_4149"/>
<dbReference type="eggNOG" id="COG0213">
    <property type="taxonomic scope" value="Bacteria"/>
</dbReference>
<dbReference type="HOGENOM" id="CLU_025040_6_0_5"/>
<dbReference type="OrthoDB" id="341217at2"/>
<dbReference type="GO" id="GO:0005829">
    <property type="term" value="C:cytosol"/>
    <property type="evidence" value="ECO:0007669"/>
    <property type="project" value="TreeGrafter"/>
</dbReference>
<dbReference type="GO" id="GO:0004645">
    <property type="term" value="F:1,4-alpha-oligoglucan phosphorylase activity"/>
    <property type="evidence" value="ECO:0007669"/>
    <property type="project" value="InterPro"/>
</dbReference>
<dbReference type="GO" id="GO:0009032">
    <property type="term" value="F:thymidine phosphorylase activity"/>
    <property type="evidence" value="ECO:0007669"/>
    <property type="project" value="UniProtKB-UniRule"/>
</dbReference>
<dbReference type="GO" id="GO:0006206">
    <property type="term" value="P:pyrimidine nucleobase metabolic process"/>
    <property type="evidence" value="ECO:0007669"/>
    <property type="project" value="InterPro"/>
</dbReference>
<dbReference type="GO" id="GO:0006213">
    <property type="term" value="P:pyrimidine nucleoside metabolic process"/>
    <property type="evidence" value="ECO:0007669"/>
    <property type="project" value="InterPro"/>
</dbReference>
<dbReference type="Gene3D" id="1.20.970.50">
    <property type="match status" value="1"/>
</dbReference>
<dbReference type="Gene3D" id="3.40.1030.10">
    <property type="entry name" value="Nucleoside phosphorylase/phosphoribosyltransferase catalytic domain"/>
    <property type="match status" value="1"/>
</dbReference>
<dbReference type="Gene3D" id="3.90.1170.30">
    <property type="entry name" value="Pyrimidine nucleoside phosphorylase-like, C-terminal domain"/>
    <property type="match status" value="1"/>
</dbReference>
<dbReference type="HAMAP" id="MF_00703">
    <property type="entry name" value="Thymid_phosp_2"/>
    <property type="match status" value="1"/>
</dbReference>
<dbReference type="InterPro" id="IPR000312">
    <property type="entry name" value="Glycosyl_Trfase_fam3"/>
</dbReference>
<dbReference type="InterPro" id="IPR017459">
    <property type="entry name" value="Glycosyl_Trfase_fam3_N_dom"/>
</dbReference>
<dbReference type="InterPro" id="IPR036320">
    <property type="entry name" value="Glycosyl_Trfase_fam3_N_dom_sf"/>
</dbReference>
<dbReference type="InterPro" id="IPR035902">
    <property type="entry name" value="Nuc_phospho_transferase"/>
</dbReference>
<dbReference type="InterPro" id="IPR036566">
    <property type="entry name" value="PYNP-like_C_sf"/>
</dbReference>
<dbReference type="InterPro" id="IPR013102">
    <property type="entry name" value="PYNP_C"/>
</dbReference>
<dbReference type="InterPro" id="IPR017872">
    <property type="entry name" value="Pyrmidine_PPase_CS"/>
</dbReference>
<dbReference type="InterPro" id="IPR028579">
    <property type="entry name" value="Thym_Pase_Put"/>
</dbReference>
<dbReference type="InterPro" id="IPR013466">
    <property type="entry name" value="Thymidine/AMP_Pase"/>
</dbReference>
<dbReference type="InterPro" id="IPR000053">
    <property type="entry name" value="Thymidine/pyrmidine_PPase"/>
</dbReference>
<dbReference type="NCBIfam" id="TIGR02645">
    <property type="entry name" value="ARCH_P_rylase"/>
    <property type="match status" value="1"/>
</dbReference>
<dbReference type="NCBIfam" id="NF003338">
    <property type="entry name" value="PRK04350.1"/>
    <property type="match status" value="1"/>
</dbReference>
<dbReference type="PANTHER" id="PTHR10515">
    <property type="entry name" value="THYMIDINE PHOSPHORYLASE"/>
    <property type="match status" value="1"/>
</dbReference>
<dbReference type="PANTHER" id="PTHR10515:SF0">
    <property type="entry name" value="THYMIDINE PHOSPHORYLASE"/>
    <property type="match status" value="1"/>
</dbReference>
<dbReference type="Pfam" id="PF02885">
    <property type="entry name" value="Glycos_trans_3N"/>
    <property type="match status" value="1"/>
</dbReference>
<dbReference type="Pfam" id="PF00591">
    <property type="entry name" value="Glycos_transf_3"/>
    <property type="match status" value="1"/>
</dbReference>
<dbReference type="Pfam" id="PF07831">
    <property type="entry name" value="PYNP_C"/>
    <property type="match status" value="1"/>
</dbReference>
<dbReference type="SMART" id="SM00941">
    <property type="entry name" value="PYNP_C"/>
    <property type="match status" value="1"/>
</dbReference>
<dbReference type="SUPFAM" id="SSF52418">
    <property type="entry name" value="Nucleoside phosphorylase/phosphoribosyltransferase catalytic domain"/>
    <property type="match status" value="1"/>
</dbReference>
<dbReference type="SUPFAM" id="SSF47648">
    <property type="entry name" value="Nucleoside phosphorylase/phosphoribosyltransferase N-terminal domain"/>
    <property type="match status" value="1"/>
</dbReference>
<dbReference type="SUPFAM" id="SSF54680">
    <property type="entry name" value="Pyrimidine nucleoside phosphorylase C-terminal domain"/>
    <property type="match status" value="1"/>
</dbReference>
<dbReference type="PROSITE" id="PS00647">
    <property type="entry name" value="THYMID_PHOSPHORYLASE"/>
    <property type="match status" value="1"/>
</dbReference>
<accession>Q07J10</accession>
<organism>
    <name type="scientific">Rhodopseudomonas palustris (strain BisA53)</name>
    <dbReference type="NCBI Taxonomy" id="316055"/>
    <lineage>
        <taxon>Bacteria</taxon>
        <taxon>Pseudomonadati</taxon>
        <taxon>Pseudomonadota</taxon>
        <taxon>Alphaproteobacteria</taxon>
        <taxon>Hyphomicrobiales</taxon>
        <taxon>Nitrobacteraceae</taxon>
        <taxon>Rhodopseudomonas</taxon>
    </lineage>
</organism>
<reference key="1">
    <citation type="submission" date="2006-09" db="EMBL/GenBank/DDBJ databases">
        <title>Complete sequence of Rhodopseudomonas palustris BisA53.</title>
        <authorList>
            <consortium name="US DOE Joint Genome Institute"/>
            <person name="Copeland A."/>
            <person name="Lucas S."/>
            <person name="Lapidus A."/>
            <person name="Barry K."/>
            <person name="Detter J.C."/>
            <person name="Glavina del Rio T."/>
            <person name="Hammon N."/>
            <person name="Israni S."/>
            <person name="Dalin E."/>
            <person name="Tice H."/>
            <person name="Pitluck S."/>
            <person name="Chain P."/>
            <person name="Malfatti S."/>
            <person name="Shin M."/>
            <person name="Vergez L."/>
            <person name="Schmutz J."/>
            <person name="Larimer F."/>
            <person name="Land M."/>
            <person name="Hauser L."/>
            <person name="Pelletier D.A."/>
            <person name="Kyrpides N."/>
            <person name="Kim E."/>
            <person name="Harwood C.S."/>
            <person name="Oda Y."/>
            <person name="Richardson P."/>
        </authorList>
    </citation>
    <scope>NUCLEOTIDE SEQUENCE [LARGE SCALE GENOMIC DNA]</scope>
    <source>
        <strain>BisA53</strain>
    </source>
</reference>
<gene>
    <name type="ordered locus">RPE_4149</name>
</gene>
<sequence length="513" mass="54877">MSPVDAARPQLKIRQIHLDTGRENVAVISRHSKALRPEVFSGFSRVEIRRGNQSMLATLLITDDNAMVGPDDLGLAEPAFRRFGEAAGSLVSVTPASPPASLDAVRGKIQGRTLTAPEIEAIVNDLARYRYSDMEIAAFLIGAARFMTSDELLALVSAMASVGTQLRWDRPVVVDKHCIGGIPGNRTSMVLVPIVAAHGLTIPKTSSRAITSPAGTADTMEVLARVDVGVPEMKEIVAACNGCLIWGGHVNLSPADDILISVERPLCLDTREQMVASIMSKKLAAGSTHLLVDLPLGPSAKVISPIDAMRLRKLFEFVGDHFGIAVETITTDGRQPIGNGIGPVLEAQDVMAVLGNDPKAPADLREKSLRLAGHLLEYDPNLRGGSGYARARELLESGAALKQMQKIIDNQGPTNCRKDLGTLTTDIVAPRDGVVTGIDNLQLNRLARTAGAPIDKGAGIKLFKKVGDRVEQGEPLYRIYAFDPSEQELAVSAAEESSGYTVDGVHAFREQVL</sequence>
<protein>
    <recommendedName>
        <fullName evidence="1">Putative thymidine phosphorylase</fullName>
        <ecNumber evidence="1">2.4.2.4</ecNumber>
    </recommendedName>
    <alternativeName>
        <fullName evidence="1">TdRPase</fullName>
    </alternativeName>
</protein>
<proteinExistence type="inferred from homology"/>
<keyword id="KW-0328">Glycosyltransferase</keyword>
<keyword id="KW-0808">Transferase</keyword>